<reference key="1">
    <citation type="journal article" date="2009" name="J. Bacteriol.">
        <title>The complete genome sequence of Helicobacter pylori strain G27.</title>
        <authorList>
            <person name="Baltrus D.A."/>
            <person name="Amieva M.R."/>
            <person name="Covacci A."/>
            <person name="Lowe T.M."/>
            <person name="Merrell D.S."/>
            <person name="Ottemann K.M."/>
            <person name="Stein M."/>
            <person name="Salama N.R."/>
            <person name="Guillemin K."/>
        </authorList>
    </citation>
    <scope>NUCLEOTIDE SEQUENCE [LARGE SCALE GENOMIC DNA]</scope>
    <source>
        <strain>G27</strain>
    </source>
</reference>
<name>GUAC_HELPG</name>
<gene>
    <name evidence="1" type="primary">guaC</name>
    <name type="ordered locus">HPG27_810</name>
</gene>
<dbReference type="EC" id="1.7.1.7" evidence="1"/>
<dbReference type="EMBL" id="CP001173">
    <property type="protein sequence ID" value="ACI27565.1"/>
    <property type="molecule type" value="Genomic_DNA"/>
</dbReference>
<dbReference type="RefSeq" id="WP_000862270.1">
    <property type="nucleotide sequence ID" value="NC_011333.1"/>
</dbReference>
<dbReference type="SMR" id="B5Z7L6"/>
<dbReference type="KEGG" id="hpg:HPG27_810"/>
<dbReference type="HOGENOM" id="CLU_022552_5_0_7"/>
<dbReference type="Proteomes" id="UP000001735">
    <property type="component" value="Chromosome"/>
</dbReference>
<dbReference type="GO" id="GO:0005829">
    <property type="term" value="C:cytosol"/>
    <property type="evidence" value="ECO:0007669"/>
    <property type="project" value="TreeGrafter"/>
</dbReference>
<dbReference type="GO" id="GO:1902560">
    <property type="term" value="C:GMP reductase complex"/>
    <property type="evidence" value="ECO:0007669"/>
    <property type="project" value="InterPro"/>
</dbReference>
<dbReference type="GO" id="GO:0003920">
    <property type="term" value="F:GMP reductase activity"/>
    <property type="evidence" value="ECO:0007669"/>
    <property type="project" value="UniProtKB-UniRule"/>
</dbReference>
<dbReference type="GO" id="GO:0006163">
    <property type="term" value="P:purine nucleotide metabolic process"/>
    <property type="evidence" value="ECO:0007669"/>
    <property type="project" value="UniProtKB-UniRule"/>
</dbReference>
<dbReference type="CDD" id="cd00381">
    <property type="entry name" value="IMPDH"/>
    <property type="match status" value="1"/>
</dbReference>
<dbReference type="FunFam" id="3.20.20.70:FF:000079">
    <property type="entry name" value="GMP reductase"/>
    <property type="match status" value="1"/>
</dbReference>
<dbReference type="Gene3D" id="3.20.20.70">
    <property type="entry name" value="Aldolase class I"/>
    <property type="match status" value="1"/>
</dbReference>
<dbReference type="HAMAP" id="MF_01511">
    <property type="entry name" value="GMP_reduct_type2"/>
    <property type="match status" value="1"/>
</dbReference>
<dbReference type="InterPro" id="IPR013785">
    <property type="entry name" value="Aldolase_TIM"/>
</dbReference>
<dbReference type="InterPro" id="IPR050139">
    <property type="entry name" value="GMP_reductase"/>
</dbReference>
<dbReference type="InterPro" id="IPR005994">
    <property type="entry name" value="GuaC_type_2"/>
</dbReference>
<dbReference type="InterPro" id="IPR015875">
    <property type="entry name" value="IMP_DH/GMP_Rdtase_CS"/>
</dbReference>
<dbReference type="InterPro" id="IPR001093">
    <property type="entry name" value="IMP_DH_GMPRt"/>
</dbReference>
<dbReference type="NCBIfam" id="TIGR01306">
    <property type="entry name" value="GMP_reduct_2"/>
    <property type="match status" value="1"/>
</dbReference>
<dbReference type="NCBIfam" id="NF003966">
    <property type="entry name" value="PRK05458.1"/>
    <property type="match status" value="1"/>
</dbReference>
<dbReference type="PANTHER" id="PTHR43170">
    <property type="entry name" value="GMP REDUCTASE"/>
    <property type="match status" value="1"/>
</dbReference>
<dbReference type="PANTHER" id="PTHR43170:SF5">
    <property type="entry name" value="GMP REDUCTASE"/>
    <property type="match status" value="1"/>
</dbReference>
<dbReference type="Pfam" id="PF00478">
    <property type="entry name" value="IMPDH"/>
    <property type="match status" value="1"/>
</dbReference>
<dbReference type="PIRSF" id="PIRSF036500">
    <property type="entry name" value="GMP_red_Firmic"/>
    <property type="match status" value="1"/>
</dbReference>
<dbReference type="SMART" id="SM01240">
    <property type="entry name" value="IMPDH"/>
    <property type="match status" value="1"/>
</dbReference>
<dbReference type="SUPFAM" id="SSF51412">
    <property type="entry name" value="Inosine monophosphate dehydrogenase (IMPDH)"/>
    <property type="match status" value="1"/>
</dbReference>
<dbReference type="PROSITE" id="PS00487">
    <property type="entry name" value="IMP_DH_GMP_RED"/>
    <property type="match status" value="1"/>
</dbReference>
<accession>B5Z7L6</accession>
<organism>
    <name type="scientific">Helicobacter pylori (strain G27)</name>
    <dbReference type="NCBI Taxonomy" id="563041"/>
    <lineage>
        <taxon>Bacteria</taxon>
        <taxon>Pseudomonadati</taxon>
        <taxon>Campylobacterota</taxon>
        <taxon>Epsilonproteobacteria</taxon>
        <taxon>Campylobacterales</taxon>
        <taxon>Helicobacteraceae</taxon>
        <taxon>Helicobacter</taxon>
    </lineage>
</organism>
<proteinExistence type="inferred from homology"/>
<evidence type="ECO:0000255" key="1">
    <source>
        <dbReference type="HAMAP-Rule" id="MF_01511"/>
    </source>
</evidence>
<feature type="chain" id="PRO_1000146136" description="GMP reductase">
    <location>
        <begin position="1"/>
        <end position="325"/>
    </location>
</feature>
<feature type="active site" description="Thioimidate intermediate" evidence="1">
    <location>
        <position position="174"/>
    </location>
</feature>
<feature type="binding site" evidence="1">
    <location>
        <begin position="203"/>
        <end position="226"/>
    </location>
    <ligand>
        <name>NADP(+)</name>
        <dbReference type="ChEBI" id="CHEBI:58349"/>
    </ligand>
</feature>
<protein>
    <recommendedName>
        <fullName evidence="1">GMP reductase</fullName>
        <ecNumber evidence="1">1.7.1.7</ecNumber>
    </recommendedName>
    <alternativeName>
        <fullName evidence="1">Guanosine 5'-monophosphate oxidoreductase</fullName>
        <shortName evidence="1">Guanosine monophosphate reductase</shortName>
    </alternativeName>
</protein>
<sequence length="325" mass="35953">MKVFDYEDVQLIPNKCIVNSRSECDTTVILGKHAFKMPIVPANMQTIINRSIAEFLAENGYFYIMHRFNGSARIPFVKKMKERQWISSISVGVKKEEYLLIEELAKQGLTPDYITIDIAHGHSNSVIEMIQRIKTHLPETFVIAGNVGTPEAVRELENAGADATKVGIGPGKVCITKIKTGFGTGGWQLAALRWCAKAARKPIIADGGIRTHGDIAKSIRFGATMVMIGSLFAGHEESSGETKIENGIAYKEYFGSASEFQKGEKKNVEGKKIWIQHKGSLKDTLIEMHQDLQSSISYAGGRDLEAIRKVDYVIVKNSIFNGDTI</sequence>
<keyword id="KW-0521">NADP</keyword>
<keyword id="KW-0560">Oxidoreductase</keyword>
<keyword id="KW-1185">Reference proteome</keyword>
<comment type="function">
    <text evidence="1">Catalyzes the irreversible NADPH-dependent deamination of GMP to IMP. It functions in the conversion of nucleobase, nucleoside and nucleotide derivatives of G to A nucleotides, and in maintaining the intracellular balance of A and G nucleotides.</text>
</comment>
<comment type="catalytic activity">
    <reaction evidence="1">
        <text>IMP + NH4(+) + NADP(+) = GMP + NADPH + 2 H(+)</text>
        <dbReference type="Rhea" id="RHEA:17185"/>
        <dbReference type="ChEBI" id="CHEBI:15378"/>
        <dbReference type="ChEBI" id="CHEBI:28938"/>
        <dbReference type="ChEBI" id="CHEBI:57783"/>
        <dbReference type="ChEBI" id="CHEBI:58053"/>
        <dbReference type="ChEBI" id="CHEBI:58115"/>
        <dbReference type="ChEBI" id="CHEBI:58349"/>
        <dbReference type="EC" id="1.7.1.7"/>
    </reaction>
</comment>
<comment type="similarity">
    <text evidence="1">Belongs to the IMPDH/GMPR family. GuaC type 2 subfamily.</text>
</comment>